<organism>
    <name type="scientific">Legionella pneumophila (strain Lens)</name>
    <dbReference type="NCBI Taxonomy" id="297245"/>
    <lineage>
        <taxon>Bacteria</taxon>
        <taxon>Pseudomonadati</taxon>
        <taxon>Pseudomonadota</taxon>
        <taxon>Gammaproteobacteria</taxon>
        <taxon>Legionellales</taxon>
        <taxon>Legionellaceae</taxon>
        <taxon>Legionella</taxon>
    </lineage>
</organism>
<reference key="1">
    <citation type="journal article" date="2004" name="Nat. Genet.">
        <title>Evidence in the Legionella pneumophila genome for exploitation of host cell functions and high genome plasticity.</title>
        <authorList>
            <person name="Cazalet C."/>
            <person name="Rusniok C."/>
            <person name="Brueggemann H."/>
            <person name="Zidane N."/>
            <person name="Magnier A."/>
            <person name="Ma L."/>
            <person name="Tichit M."/>
            <person name="Jarraud S."/>
            <person name="Bouchier C."/>
            <person name="Vandenesch F."/>
            <person name="Kunst F."/>
            <person name="Etienne J."/>
            <person name="Glaser P."/>
            <person name="Buchrieser C."/>
        </authorList>
    </citation>
    <scope>NUCLEOTIDE SEQUENCE [LARGE SCALE GENOMIC DNA]</scope>
    <source>
        <strain>Lens</strain>
    </source>
</reference>
<proteinExistence type="inferred from homology"/>
<gene>
    <name evidence="1" type="primary">orn</name>
    <name type="ordered locus">lpl2666</name>
</gene>
<comment type="function">
    <text evidence="1">3'-to-5' exoribonuclease specific for small oligoribonucleotides.</text>
</comment>
<comment type="subcellular location">
    <subcellularLocation>
        <location evidence="1">Cytoplasm</location>
    </subcellularLocation>
</comment>
<comment type="similarity">
    <text evidence="1">Belongs to the oligoribonuclease family.</text>
</comment>
<keyword id="KW-0963">Cytoplasm</keyword>
<keyword id="KW-0269">Exonuclease</keyword>
<keyword id="KW-0378">Hydrolase</keyword>
<keyword id="KW-0540">Nuclease</keyword>
<feature type="chain" id="PRO_0000111044" description="Oligoribonuclease">
    <location>
        <begin position="1"/>
        <end position="187"/>
    </location>
</feature>
<feature type="domain" description="Exonuclease" evidence="1">
    <location>
        <begin position="7"/>
        <end position="170"/>
    </location>
</feature>
<feature type="active site" evidence="1">
    <location>
        <position position="128"/>
    </location>
</feature>
<protein>
    <recommendedName>
        <fullName evidence="1">Oligoribonuclease</fullName>
        <ecNumber evidence="1">3.1.15.-</ecNumber>
    </recommendedName>
</protein>
<accession>Q5WT59</accession>
<name>ORN_LEGPL</name>
<evidence type="ECO:0000255" key="1">
    <source>
        <dbReference type="HAMAP-Rule" id="MF_00045"/>
    </source>
</evidence>
<sequence length="187" mass="21737">MKNNQNLIWIDLEMTGLEPEQDRIIEMATIVTDPQLNILAEGPVIAVSQPKILLDSMDAWNTKQHNQSGLVKRVLESNVSESQAEQLTIEFLKQYVDKGKSPMCGNSICQDRRFLYKYMPELAAYFHYRNLDVSSLKELVLRWRPELMNGVVKESKHLALDDIKDSINELIYYRQHFINLPEVKNDK</sequence>
<dbReference type="EC" id="3.1.15.-" evidence="1"/>
<dbReference type="EMBL" id="CR628337">
    <property type="protein sequence ID" value="CAH16907.1"/>
    <property type="molecule type" value="Genomic_DNA"/>
</dbReference>
<dbReference type="RefSeq" id="WP_010948439.1">
    <property type="nucleotide sequence ID" value="NC_006369.1"/>
</dbReference>
<dbReference type="SMR" id="Q5WT59"/>
<dbReference type="GeneID" id="57036742"/>
<dbReference type="KEGG" id="lpf:lpl2666"/>
<dbReference type="LegioList" id="lpl2666"/>
<dbReference type="HOGENOM" id="CLU_064761_2_0_6"/>
<dbReference type="Proteomes" id="UP000002517">
    <property type="component" value="Chromosome"/>
</dbReference>
<dbReference type="GO" id="GO:0005737">
    <property type="term" value="C:cytoplasm"/>
    <property type="evidence" value="ECO:0007669"/>
    <property type="project" value="UniProtKB-SubCell"/>
</dbReference>
<dbReference type="GO" id="GO:0000175">
    <property type="term" value="F:3'-5'-RNA exonuclease activity"/>
    <property type="evidence" value="ECO:0007669"/>
    <property type="project" value="InterPro"/>
</dbReference>
<dbReference type="GO" id="GO:0003676">
    <property type="term" value="F:nucleic acid binding"/>
    <property type="evidence" value="ECO:0007669"/>
    <property type="project" value="InterPro"/>
</dbReference>
<dbReference type="GO" id="GO:0006259">
    <property type="term" value="P:DNA metabolic process"/>
    <property type="evidence" value="ECO:0007669"/>
    <property type="project" value="UniProtKB-ARBA"/>
</dbReference>
<dbReference type="CDD" id="cd06135">
    <property type="entry name" value="Orn"/>
    <property type="match status" value="1"/>
</dbReference>
<dbReference type="FunFam" id="3.30.420.10:FF:000003">
    <property type="entry name" value="Oligoribonuclease"/>
    <property type="match status" value="1"/>
</dbReference>
<dbReference type="Gene3D" id="3.30.420.10">
    <property type="entry name" value="Ribonuclease H-like superfamily/Ribonuclease H"/>
    <property type="match status" value="1"/>
</dbReference>
<dbReference type="HAMAP" id="MF_00045">
    <property type="entry name" value="Oligoribonuclease"/>
    <property type="match status" value="1"/>
</dbReference>
<dbReference type="InterPro" id="IPR013520">
    <property type="entry name" value="Exonuclease_RNaseT/DNA_pol3"/>
</dbReference>
<dbReference type="InterPro" id="IPR022894">
    <property type="entry name" value="Oligoribonuclease"/>
</dbReference>
<dbReference type="InterPro" id="IPR012337">
    <property type="entry name" value="RNaseH-like_sf"/>
</dbReference>
<dbReference type="InterPro" id="IPR036397">
    <property type="entry name" value="RNaseH_sf"/>
</dbReference>
<dbReference type="NCBIfam" id="NF003765">
    <property type="entry name" value="PRK05359.1"/>
    <property type="match status" value="1"/>
</dbReference>
<dbReference type="PANTHER" id="PTHR11046">
    <property type="entry name" value="OLIGORIBONUCLEASE, MITOCHONDRIAL"/>
    <property type="match status" value="1"/>
</dbReference>
<dbReference type="PANTHER" id="PTHR11046:SF0">
    <property type="entry name" value="OLIGORIBONUCLEASE, MITOCHONDRIAL"/>
    <property type="match status" value="1"/>
</dbReference>
<dbReference type="Pfam" id="PF00929">
    <property type="entry name" value="RNase_T"/>
    <property type="match status" value="1"/>
</dbReference>
<dbReference type="SMART" id="SM00479">
    <property type="entry name" value="EXOIII"/>
    <property type="match status" value="1"/>
</dbReference>
<dbReference type="SUPFAM" id="SSF53098">
    <property type="entry name" value="Ribonuclease H-like"/>
    <property type="match status" value="1"/>
</dbReference>